<feature type="chain" id="PRO_0000126735" description="Phenylalanine--tRNA ligase alpha subunit">
    <location>
        <begin position="1"/>
        <end position="330"/>
    </location>
</feature>
<feature type="binding site" evidence="1">
    <location>
        <position position="254"/>
    </location>
    <ligand>
        <name>Mg(2+)</name>
        <dbReference type="ChEBI" id="CHEBI:18420"/>
        <note>shared with beta subunit</note>
    </ligand>
</feature>
<dbReference type="EC" id="6.1.1.20"/>
<dbReference type="EMBL" id="AE002098">
    <property type="protein sequence ID" value="AAF41137.1"/>
    <property type="molecule type" value="Genomic_DNA"/>
</dbReference>
<dbReference type="PIR" id="G81165">
    <property type="entry name" value="G81165"/>
</dbReference>
<dbReference type="RefSeq" id="NP_273766.1">
    <property type="nucleotide sequence ID" value="NC_003112.2"/>
</dbReference>
<dbReference type="RefSeq" id="WP_002244061.1">
    <property type="nucleotide sequence ID" value="NC_003112.2"/>
</dbReference>
<dbReference type="SMR" id="Q9K092"/>
<dbReference type="FunCoup" id="Q9K092">
    <property type="interactions" value="487"/>
</dbReference>
<dbReference type="STRING" id="122586.NMB0724"/>
<dbReference type="PaxDb" id="122586-NMB0724"/>
<dbReference type="KEGG" id="nme:NMB0724"/>
<dbReference type="PATRIC" id="fig|122586.8.peg.923"/>
<dbReference type="HOGENOM" id="CLU_025086_0_1_4"/>
<dbReference type="InParanoid" id="Q9K092"/>
<dbReference type="OrthoDB" id="9800719at2"/>
<dbReference type="Proteomes" id="UP000000425">
    <property type="component" value="Chromosome"/>
</dbReference>
<dbReference type="GO" id="GO:0005737">
    <property type="term" value="C:cytoplasm"/>
    <property type="evidence" value="ECO:0000318"/>
    <property type="project" value="GO_Central"/>
</dbReference>
<dbReference type="GO" id="GO:0005524">
    <property type="term" value="F:ATP binding"/>
    <property type="evidence" value="ECO:0007669"/>
    <property type="project" value="UniProtKB-UniRule"/>
</dbReference>
<dbReference type="GO" id="GO:0000287">
    <property type="term" value="F:magnesium ion binding"/>
    <property type="evidence" value="ECO:0007669"/>
    <property type="project" value="UniProtKB-UniRule"/>
</dbReference>
<dbReference type="GO" id="GO:0004826">
    <property type="term" value="F:phenylalanine-tRNA ligase activity"/>
    <property type="evidence" value="ECO:0000318"/>
    <property type="project" value="GO_Central"/>
</dbReference>
<dbReference type="GO" id="GO:0000049">
    <property type="term" value="F:tRNA binding"/>
    <property type="evidence" value="ECO:0007669"/>
    <property type="project" value="InterPro"/>
</dbReference>
<dbReference type="GO" id="GO:0006432">
    <property type="term" value="P:phenylalanyl-tRNA aminoacylation"/>
    <property type="evidence" value="ECO:0000318"/>
    <property type="project" value="GO_Central"/>
</dbReference>
<dbReference type="CDD" id="cd00496">
    <property type="entry name" value="PheRS_alpha_core"/>
    <property type="match status" value="1"/>
</dbReference>
<dbReference type="FunFam" id="3.30.930.10:FF:000003">
    <property type="entry name" value="Phenylalanine--tRNA ligase alpha subunit"/>
    <property type="match status" value="1"/>
</dbReference>
<dbReference type="Gene3D" id="3.30.930.10">
    <property type="entry name" value="Bira Bifunctional Protein, Domain 2"/>
    <property type="match status" value="1"/>
</dbReference>
<dbReference type="HAMAP" id="MF_00281">
    <property type="entry name" value="Phe_tRNA_synth_alpha1"/>
    <property type="match status" value="1"/>
</dbReference>
<dbReference type="InterPro" id="IPR006195">
    <property type="entry name" value="aa-tRNA-synth_II"/>
</dbReference>
<dbReference type="InterPro" id="IPR045864">
    <property type="entry name" value="aa-tRNA-synth_II/BPL/LPL"/>
</dbReference>
<dbReference type="InterPro" id="IPR004529">
    <property type="entry name" value="Phe-tRNA-synth_IIc_asu"/>
</dbReference>
<dbReference type="InterPro" id="IPR004188">
    <property type="entry name" value="Phe-tRNA_ligase_II_N"/>
</dbReference>
<dbReference type="InterPro" id="IPR022911">
    <property type="entry name" value="Phe_tRNA_ligase_alpha1_bac"/>
</dbReference>
<dbReference type="InterPro" id="IPR002319">
    <property type="entry name" value="Phenylalanyl-tRNA_Synthase"/>
</dbReference>
<dbReference type="InterPro" id="IPR010978">
    <property type="entry name" value="tRNA-bd_arm"/>
</dbReference>
<dbReference type="NCBIfam" id="TIGR00468">
    <property type="entry name" value="pheS"/>
    <property type="match status" value="1"/>
</dbReference>
<dbReference type="PANTHER" id="PTHR11538:SF41">
    <property type="entry name" value="PHENYLALANINE--TRNA LIGASE, MITOCHONDRIAL"/>
    <property type="match status" value="1"/>
</dbReference>
<dbReference type="PANTHER" id="PTHR11538">
    <property type="entry name" value="PHENYLALANYL-TRNA SYNTHETASE"/>
    <property type="match status" value="1"/>
</dbReference>
<dbReference type="Pfam" id="PF02912">
    <property type="entry name" value="Phe_tRNA-synt_N"/>
    <property type="match status" value="1"/>
</dbReference>
<dbReference type="Pfam" id="PF01409">
    <property type="entry name" value="tRNA-synt_2d"/>
    <property type="match status" value="1"/>
</dbReference>
<dbReference type="SUPFAM" id="SSF55681">
    <property type="entry name" value="Class II aaRS and biotin synthetases"/>
    <property type="match status" value="1"/>
</dbReference>
<dbReference type="SUPFAM" id="SSF46589">
    <property type="entry name" value="tRNA-binding arm"/>
    <property type="match status" value="1"/>
</dbReference>
<dbReference type="PROSITE" id="PS50862">
    <property type="entry name" value="AA_TRNA_LIGASE_II"/>
    <property type="match status" value="1"/>
</dbReference>
<accession>Q9K092</accession>
<proteinExistence type="inferred from homology"/>
<keyword id="KW-0030">Aminoacyl-tRNA synthetase</keyword>
<keyword id="KW-0067">ATP-binding</keyword>
<keyword id="KW-0963">Cytoplasm</keyword>
<keyword id="KW-0436">Ligase</keyword>
<keyword id="KW-0460">Magnesium</keyword>
<keyword id="KW-0479">Metal-binding</keyword>
<keyword id="KW-0547">Nucleotide-binding</keyword>
<keyword id="KW-0648">Protein biosynthesis</keyword>
<keyword id="KW-1185">Reference proteome</keyword>
<evidence type="ECO:0000250" key="1"/>
<evidence type="ECO:0000305" key="2"/>
<sequence>MENVNRIVAEGIAAVEAAQDFNALEQIKARYLGKTGELTGLLKTLGQMSPEERKTIGAHINECKNRFQTAFNAKREALNEVKLQARLAAEALDITLPGRAQEGGSLHPVTLTLQRVVELFHGMGFEVADGPEIEDDFHNFQALNIPANHPARAMQDTFYVENGDVLRTHTSPIQIRYMLDKKEPPIRIIAPGRVYRVDSDATHSPMFHQAEGLWVEEGVTFADLKAVFTDFIRRFFERDDLQVRFRPSFFPFTEPSAEIDIMGENGKWLEVGGCGMVHPNVLKNVNIDPEKYTGFAFGIGLDRFAMLRYNVNDLRLFFDNDLNFLKQFAK</sequence>
<protein>
    <recommendedName>
        <fullName>Phenylalanine--tRNA ligase alpha subunit</fullName>
        <ecNumber>6.1.1.20</ecNumber>
    </recommendedName>
    <alternativeName>
        <fullName>Phenylalanyl-tRNA synthetase alpha subunit</fullName>
        <shortName>PheRS</shortName>
    </alternativeName>
</protein>
<reference key="1">
    <citation type="journal article" date="2000" name="Science">
        <title>Complete genome sequence of Neisseria meningitidis serogroup B strain MC58.</title>
        <authorList>
            <person name="Tettelin H."/>
            <person name="Saunders N.J."/>
            <person name="Heidelberg J.F."/>
            <person name="Jeffries A.C."/>
            <person name="Nelson K.E."/>
            <person name="Eisen J.A."/>
            <person name="Ketchum K.A."/>
            <person name="Hood D.W."/>
            <person name="Peden J.F."/>
            <person name="Dodson R.J."/>
            <person name="Nelson W.C."/>
            <person name="Gwinn M.L."/>
            <person name="DeBoy R.T."/>
            <person name="Peterson J.D."/>
            <person name="Hickey E.K."/>
            <person name="Haft D.H."/>
            <person name="Salzberg S.L."/>
            <person name="White O."/>
            <person name="Fleischmann R.D."/>
            <person name="Dougherty B.A."/>
            <person name="Mason T.M."/>
            <person name="Ciecko A."/>
            <person name="Parksey D.S."/>
            <person name="Blair E."/>
            <person name="Cittone H."/>
            <person name="Clark E.B."/>
            <person name="Cotton M.D."/>
            <person name="Utterback T.R."/>
            <person name="Khouri H.M."/>
            <person name="Qin H."/>
            <person name="Vamathevan J.J."/>
            <person name="Gill J."/>
            <person name="Scarlato V."/>
            <person name="Masignani V."/>
            <person name="Pizza M."/>
            <person name="Grandi G."/>
            <person name="Sun L."/>
            <person name="Smith H.O."/>
            <person name="Fraser C.M."/>
            <person name="Moxon E.R."/>
            <person name="Rappuoli R."/>
            <person name="Venter J.C."/>
        </authorList>
    </citation>
    <scope>NUCLEOTIDE SEQUENCE [LARGE SCALE GENOMIC DNA]</scope>
    <source>
        <strain>ATCC BAA-335 / MC58</strain>
    </source>
</reference>
<gene>
    <name type="primary">pheS</name>
    <name type="ordered locus">NMB0724</name>
</gene>
<comment type="catalytic activity">
    <reaction>
        <text>tRNA(Phe) + L-phenylalanine + ATP = L-phenylalanyl-tRNA(Phe) + AMP + diphosphate + H(+)</text>
        <dbReference type="Rhea" id="RHEA:19413"/>
        <dbReference type="Rhea" id="RHEA-COMP:9668"/>
        <dbReference type="Rhea" id="RHEA-COMP:9699"/>
        <dbReference type="ChEBI" id="CHEBI:15378"/>
        <dbReference type="ChEBI" id="CHEBI:30616"/>
        <dbReference type="ChEBI" id="CHEBI:33019"/>
        <dbReference type="ChEBI" id="CHEBI:58095"/>
        <dbReference type="ChEBI" id="CHEBI:78442"/>
        <dbReference type="ChEBI" id="CHEBI:78531"/>
        <dbReference type="ChEBI" id="CHEBI:456215"/>
        <dbReference type="EC" id="6.1.1.20"/>
    </reaction>
</comment>
<comment type="cofactor">
    <cofactor evidence="1">
        <name>Mg(2+)</name>
        <dbReference type="ChEBI" id="CHEBI:18420"/>
    </cofactor>
    <text evidence="1">Binds 2 magnesium ions per tetramer.</text>
</comment>
<comment type="subunit">
    <text evidence="1">Tetramer of two alpha and two beta subunits.</text>
</comment>
<comment type="subcellular location">
    <subcellularLocation>
        <location evidence="1">Cytoplasm</location>
    </subcellularLocation>
</comment>
<comment type="similarity">
    <text evidence="2">Belongs to the class-II aminoacyl-tRNA synthetase family. Phe-tRNA synthetase alpha subunit type 1 subfamily.</text>
</comment>
<name>SYFA_NEIMB</name>
<organism>
    <name type="scientific">Neisseria meningitidis serogroup B (strain ATCC BAA-335 / MC58)</name>
    <dbReference type="NCBI Taxonomy" id="122586"/>
    <lineage>
        <taxon>Bacteria</taxon>
        <taxon>Pseudomonadati</taxon>
        <taxon>Pseudomonadota</taxon>
        <taxon>Betaproteobacteria</taxon>
        <taxon>Neisseriales</taxon>
        <taxon>Neisseriaceae</taxon>
        <taxon>Neisseria</taxon>
    </lineage>
</organism>